<sequence length="137" mass="15537">MLQPKRTKFRKVQKGRNRGLAHRGSKVSFGEYGLKATGRGRITARQIEAGRRAITRHVKRGGKIWIRVFPDKPITEKPLEVRMGKGKGSVEYWVAQIQPGKVLYEIEGVSEELAREAFDLAAQKFPVSTTFVKRTVM</sequence>
<feature type="chain" id="PRO_0000251628" description="Large ribosomal subunit protein uL16">
    <location>
        <begin position="1"/>
        <end position="137"/>
    </location>
</feature>
<feature type="region of interest" description="Disordered" evidence="2">
    <location>
        <begin position="1"/>
        <end position="22"/>
    </location>
</feature>
<gene>
    <name evidence="1" type="primary">rplP</name>
    <name type="ordered locus">Csal_0428</name>
</gene>
<name>RL16_CHRSD</name>
<organism>
    <name type="scientific">Chromohalobacter salexigens (strain ATCC BAA-138 / DSM 3043 / CIP 106854 / NCIMB 13768 / 1H11)</name>
    <dbReference type="NCBI Taxonomy" id="290398"/>
    <lineage>
        <taxon>Bacteria</taxon>
        <taxon>Pseudomonadati</taxon>
        <taxon>Pseudomonadota</taxon>
        <taxon>Gammaproteobacteria</taxon>
        <taxon>Oceanospirillales</taxon>
        <taxon>Halomonadaceae</taxon>
        <taxon>Chromohalobacter</taxon>
    </lineage>
</organism>
<accession>Q1R0G8</accession>
<keyword id="KW-1185">Reference proteome</keyword>
<keyword id="KW-0687">Ribonucleoprotein</keyword>
<keyword id="KW-0689">Ribosomal protein</keyword>
<keyword id="KW-0694">RNA-binding</keyword>
<keyword id="KW-0699">rRNA-binding</keyword>
<keyword id="KW-0820">tRNA-binding</keyword>
<comment type="function">
    <text evidence="1">Binds 23S rRNA and is also seen to make contacts with the A and possibly P site tRNAs.</text>
</comment>
<comment type="subunit">
    <text evidence="1">Part of the 50S ribosomal subunit.</text>
</comment>
<comment type="similarity">
    <text evidence="1">Belongs to the universal ribosomal protein uL16 family.</text>
</comment>
<reference key="1">
    <citation type="journal article" date="2011" name="Stand. Genomic Sci.">
        <title>Complete genome sequence of the halophilic and highly halotolerant Chromohalobacter salexigens type strain (1H11(T)).</title>
        <authorList>
            <person name="Copeland A."/>
            <person name="O'Connor K."/>
            <person name="Lucas S."/>
            <person name="Lapidus A."/>
            <person name="Berry K.W."/>
            <person name="Detter J.C."/>
            <person name="Del Rio T.G."/>
            <person name="Hammon N."/>
            <person name="Dalin E."/>
            <person name="Tice H."/>
            <person name="Pitluck S."/>
            <person name="Bruce D."/>
            <person name="Goodwin L."/>
            <person name="Han C."/>
            <person name="Tapia R."/>
            <person name="Saunders E."/>
            <person name="Schmutz J."/>
            <person name="Brettin T."/>
            <person name="Larimer F."/>
            <person name="Land M."/>
            <person name="Hauser L."/>
            <person name="Vargas C."/>
            <person name="Nieto J.J."/>
            <person name="Kyrpides N.C."/>
            <person name="Ivanova N."/>
            <person name="Goker M."/>
            <person name="Klenk H.P."/>
            <person name="Csonka L.N."/>
            <person name="Woyke T."/>
        </authorList>
    </citation>
    <scope>NUCLEOTIDE SEQUENCE [LARGE SCALE GENOMIC DNA]</scope>
    <source>
        <strain>ATCC BAA-138 / DSM 3043 / CIP 106854 / NCIMB 13768 / 1H11</strain>
    </source>
</reference>
<evidence type="ECO:0000255" key="1">
    <source>
        <dbReference type="HAMAP-Rule" id="MF_01342"/>
    </source>
</evidence>
<evidence type="ECO:0000256" key="2">
    <source>
        <dbReference type="SAM" id="MobiDB-lite"/>
    </source>
</evidence>
<evidence type="ECO:0000305" key="3"/>
<dbReference type="EMBL" id="CP000285">
    <property type="protein sequence ID" value="ABE57790.1"/>
    <property type="molecule type" value="Genomic_DNA"/>
</dbReference>
<dbReference type="RefSeq" id="WP_011505736.1">
    <property type="nucleotide sequence ID" value="NC_007963.1"/>
</dbReference>
<dbReference type="SMR" id="Q1R0G8"/>
<dbReference type="STRING" id="290398.Csal_0428"/>
<dbReference type="GeneID" id="95333181"/>
<dbReference type="KEGG" id="csa:Csal_0428"/>
<dbReference type="eggNOG" id="COG0197">
    <property type="taxonomic scope" value="Bacteria"/>
</dbReference>
<dbReference type="HOGENOM" id="CLU_078858_2_1_6"/>
<dbReference type="OrthoDB" id="9802589at2"/>
<dbReference type="Proteomes" id="UP000000239">
    <property type="component" value="Chromosome"/>
</dbReference>
<dbReference type="GO" id="GO:0022625">
    <property type="term" value="C:cytosolic large ribosomal subunit"/>
    <property type="evidence" value="ECO:0007669"/>
    <property type="project" value="TreeGrafter"/>
</dbReference>
<dbReference type="GO" id="GO:0019843">
    <property type="term" value="F:rRNA binding"/>
    <property type="evidence" value="ECO:0007669"/>
    <property type="project" value="UniProtKB-UniRule"/>
</dbReference>
<dbReference type="GO" id="GO:0003735">
    <property type="term" value="F:structural constituent of ribosome"/>
    <property type="evidence" value="ECO:0007669"/>
    <property type="project" value="InterPro"/>
</dbReference>
<dbReference type="GO" id="GO:0000049">
    <property type="term" value="F:tRNA binding"/>
    <property type="evidence" value="ECO:0007669"/>
    <property type="project" value="UniProtKB-KW"/>
</dbReference>
<dbReference type="GO" id="GO:0006412">
    <property type="term" value="P:translation"/>
    <property type="evidence" value="ECO:0007669"/>
    <property type="project" value="UniProtKB-UniRule"/>
</dbReference>
<dbReference type="CDD" id="cd01433">
    <property type="entry name" value="Ribosomal_L16_L10e"/>
    <property type="match status" value="1"/>
</dbReference>
<dbReference type="FunFam" id="3.90.1170.10:FF:000001">
    <property type="entry name" value="50S ribosomal protein L16"/>
    <property type="match status" value="1"/>
</dbReference>
<dbReference type="Gene3D" id="3.90.1170.10">
    <property type="entry name" value="Ribosomal protein L10e/L16"/>
    <property type="match status" value="1"/>
</dbReference>
<dbReference type="HAMAP" id="MF_01342">
    <property type="entry name" value="Ribosomal_uL16"/>
    <property type="match status" value="1"/>
</dbReference>
<dbReference type="InterPro" id="IPR047873">
    <property type="entry name" value="Ribosomal_uL16"/>
</dbReference>
<dbReference type="InterPro" id="IPR000114">
    <property type="entry name" value="Ribosomal_uL16_bact-type"/>
</dbReference>
<dbReference type="InterPro" id="IPR020798">
    <property type="entry name" value="Ribosomal_uL16_CS"/>
</dbReference>
<dbReference type="InterPro" id="IPR016180">
    <property type="entry name" value="Ribosomal_uL16_dom"/>
</dbReference>
<dbReference type="InterPro" id="IPR036920">
    <property type="entry name" value="Ribosomal_uL16_sf"/>
</dbReference>
<dbReference type="NCBIfam" id="TIGR01164">
    <property type="entry name" value="rplP_bact"/>
    <property type="match status" value="1"/>
</dbReference>
<dbReference type="PANTHER" id="PTHR12220">
    <property type="entry name" value="50S/60S RIBOSOMAL PROTEIN L16"/>
    <property type="match status" value="1"/>
</dbReference>
<dbReference type="PANTHER" id="PTHR12220:SF13">
    <property type="entry name" value="LARGE RIBOSOMAL SUBUNIT PROTEIN UL16M"/>
    <property type="match status" value="1"/>
</dbReference>
<dbReference type="Pfam" id="PF00252">
    <property type="entry name" value="Ribosomal_L16"/>
    <property type="match status" value="1"/>
</dbReference>
<dbReference type="PRINTS" id="PR00060">
    <property type="entry name" value="RIBOSOMALL16"/>
</dbReference>
<dbReference type="SUPFAM" id="SSF54686">
    <property type="entry name" value="Ribosomal protein L16p/L10e"/>
    <property type="match status" value="1"/>
</dbReference>
<dbReference type="PROSITE" id="PS00586">
    <property type="entry name" value="RIBOSOMAL_L16_1"/>
    <property type="match status" value="1"/>
</dbReference>
<dbReference type="PROSITE" id="PS00701">
    <property type="entry name" value="RIBOSOMAL_L16_2"/>
    <property type="match status" value="1"/>
</dbReference>
<proteinExistence type="inferred from homology"/>
<protein>
    <recommendedName>
        <fullName evidence="1">Large ribosomal subunit protein uL16</fullName>
    </recommendedName>
    <alternativeName>
        <fullName evidence="3">50S ribosomal protein L16</fullName>
    </alternativeName>
</protein>